<gene>
    <name type="primary">slmo</name>
    <name type="ORF">DDB_G0290499</name>
</gene>
<feature type="chain" id="PRO_0000327687" description="Protein slowmo homolog">
    <location>
        <begin position="1"/>
        <end position="228"/>
    </location>
</feature>
<feature type="domain" description="PRELI/MSF1" evidence="1">
    <location>
        <begin position="1"/>
        <end position="172"/>
    </location>
</feature>
<keyword id="KW-1185">Reference proteome</keyword>
<proteinExistence type="inferred from homology"/>
<dbReference type="EMBL" id="AAFI02000164">
    <property type="protein sequence ID" value="EAL62110.1"/>
    <property type="molecule type" value="Genomic_DNA"/>
</dbReference>
<dbReference type="RefSeq" id="XP_635610.1">
    <property type="nucleotide sequence ID" value="XM_630518.1"/>
</dbReference>
<dbReference type="SMR" id="Q54G07"/>
<dbReference type="FunCoup" id="Q54G07">
    <property type="interactions" value="384"/>
</dbReference>
<dbReference type="STRING" id="44689.Q54G07"/>
<dbReference type="PaxDb" id="44689-DDB0266403"/>
<dbReference type="EnsemblProtists" id="EAL62110">
    <property type="protein sequence ID" value="EAL62110"/>
    <property type="gene ID" value="DDB_G0290499"/>
</dbReference>
<dbReference type="GeneID" id="8627682"/>
<dbReference type="KEGG" id="ddi:DDB_G0290499"/>
<dbReference type="dictyBase" id="DDB_G0290499">
    <property type="gene designation" value="slmo"/>
</dbReference>
<dbReference type="VEuPathDB" id="AmoebaDB:DDB_G0290499"/>
<dbReference type="eggNOG" id="KOG3336">
    <property type="taxonomic scope" value="Eukaryota"/>
</dbReference>
<dbReference type="HOGENOM" id="CLU_067902_1_0_1"/>
<dbReference type="InParanoid" id="Q54G07"/>
<dbReference type="OMA" id="YCPWNEK"/>
<dbReference type="PhylomeDB" id="Q54G07"/>
<dbReference type="Reactome" id="R-DDI-6803204">
    <property type="pathway name" value="TP53 Regulates Transcription of Genes Involved in Cytochrome C Release"/>
</dbReference>
<dbReference type="PRO" id="PR:Q54G07"/>
<dbReference type="Proteomes" id="UP000002195">
    <property type="component" value="Chromosome 5"/>
</dbReference>
<dbReference type="GO" id="GO:0005758">
    <property type="term" value="C:mitochondrial intermembrane space"/>
    <property type="evidence" value="ECO:0000318"/>
    <property type="project" value="GO_Central"/>
</dbReference>
<dbReference type="GO" id="GO:1990050">
    <property type="term" value="F:phosphatidic acid transfer activity"/>
    <property type="evidence" value="ECO:0000318"/>
    <property type="project" value="GO_Central"/>
</dbReference>
<dbReference type="GO" id="GO:0015914">
    <property type="term" value="P:phospholipid transport"/>
    <property type="evidence" value="ECO:0000318"/>
    <property type="project" value="GO_Central"/>
</dbReference>
<dbReference type="InterPro" id="IPR006797">
    <property type="entry name" value="PRELI/MSF1_dom"/>
</dbReference>
<dbReference type="InterPro" id="IPR037365">
    <property type="entry name" value="Slowmo/Ups"/>
</dbReference>
<dbReference type="PANTHER" id="PTHR11158">
    <property type="entry name" value="MSF1/PX19 RELATED"/>
    <property type="match status" value="1"/>
</dbReference>
<dbReference type="Pfam" id="PF04707">
    <property type="entry name" value="PRELI"/>
    <property type="match status" value="1"/>
</dbReference>
<dbReference type="PROSITE" id="PS50904">
    <property type="entry name" value="PRELI_MSF1"/>
    <property type="match status" value="1"/>
</dbReference>
<organism>
    <name type="scientific">Dictyostelium discoideum</name>
    <name type="common">Social amoeba</name>
    <dbReference type="NCBI Taxonomy" id="44689"/>
    <lineage>
        <taxon>Eukaryota</taxon>
        <taxon>Amoebozoa</taxon>
        <taxon>Evosea</taxon>
        <taxon>Eumycetozoa</taxon>
        <taxon>Dictyostelia</taxon>
        <taxon>Dictyosteliales</taxon>
        <taxon>Dictyosteliaceae</taxon>
        <taxon>Dictyostelium</taxon>
    </lineage>
</organism>
<reference key="1">
    <citation type="journal article" date="2005" name="Nature">
        <title>The genome of the social amoeba Dictyostelium discoideum.</title>
        <authorList>
            <person name="Eichinger L."/>
            <person name="Pachebat J.A."/>
            <person name="Gloeckner G."/>
            <person name="Rajandream M.A."/>
            <person name="Sucgang R."/>
            <person name="Berriman M."/>
            <person name="Song J."/>
            <person name="Olsen R."/>
            <person name="Szafranski K."/>
            <person name="Xu Q."/>
            <person name="Tunggal B."/>
            <person name="Kummerfeld S."/>
            <person name="Madera M."/>
            <person name="Konfortov B.A."/>
            <person name="Rivero F."/>
            <person name="Bankier A.T."/>
            <person name="Lehmann R."/>
            <person name="Hamlin N."/>
            <person name="Davies R."/>
            <person name="Gaudet P."/>
            <person name="Fey P."/>
            <person name="Pilcher K."/>
            <person name="Chen G."/>
            <person name="Saunders D."/>
            <person name="Sodergren E.J."/>
            <person name="Davis P."/>
            <person name="Kerhornou A."/>
            <person name="Nie X."/>
            <person name="Hall N."/>
            <person name="Anjard C."/>
            <person name="Hemphill L."/>
            <person name="Bason N."/>
            <person name="Farbrother P."/>
            <person name="Desany B."/>
            <person name="Just E."/>
            <person name="Morio T."/>
            <person name="Rost R."/>
            <person name="Churcher C.M."/>
            <person name="Cooper J."/>
            <person name="Haydock S."/>
            <person name="van Driessche N."/>
            <person name="Cronin A."/>
            <person name="Goodhead I."/>
            <person name="Muzny D.M."/>
            <person name="Mourier T."/>
            <person name="Pain A."/>
            <person name="Lu M."/>
            <person name="Harper D."/>
            <person name="Lindsay R."/>
            <person name="Hauser H."/>
            <person name="James K.D."/>
            <person name="Quiles M."/>
            <person name="Madan Babu M."/>
            <person name="Saito T."/>
            <person name="Buchrieser C."/>
            <person name="Wardroper A."/>
            <person name="Felder M."/>
            <person name="Thangavelu M."/>
            <person name="Johnson D."/>
            <person name="Knights A."/>
            <person name="Loulseged H."/>
            <person name="Mungall K.L."/>
            <person name="Oliver K."/>
            <person name="Price C."/>
            <person name="Quail M.A."/>
            <person name="Urushihara H."/>
            <person name="Hernandez J."/>
            <person name="Rabbinowitsch E."/>
            <person name="Steffen D."/>
            <person name="Sanders M."/>
            <person name="Ma J."/>
            <person name="Kohara Y."/>
            <person name="Sharp S."/>
            <person name="Simmonds M.N."/>
            <person name="Spiegler S."/>
            <person name="Tivey A."/>
            <person name="Sugano S."/>
            <person name="White B."/>
            <person name="Walker D."/>
            <person name="Woodward J.R."/>
            <person name="Winckler T."/>
            <person name="Tanaka Y."/>
            <person name="Shaulsky G."/>
            <person name="Schleicher M."/>
            <person name="Weinstock G.M."/>
            <person name="Rosenthal A."/>
            <person name="Cox E.C."/>
            <person name="Chisholm R.L."/>
            <person name="Gibbs R.A."/>
            <person name="Loomis W.F."/>
            <person name="Platzer M."/>
            <person name="Kay R.R."/>
            <person name="Williams J.G."/>
            <person name="Dear P.H."/>
            <person name="Noegel A.A."/>
            <person name="Barrell B.G."/>
            <person name="Kuspa A."/>
        </authorList>
    </citation>
    <scope>NUCLEOTIDE SEQUENCE [LARGE SCALE GENOMIC DNA]</scope>
    <source>
        <strain>AX4</strain>
    </source>
</reference>
<sequence length="228" mass="25859">MPLFETIKHTYKHLWSDASTASFRKYPSPERPDILSIDILSKEIDPTTGVLKCTKLIICKGNTPSWLKSILGSGECLFYEETTVDPKNKIMTLKTKNLNFTNILGVDEVCTYEQHPDNEEWTLFTQEATVTSSIFGVARKMEAFCLDRFVANAGKGRKIMEDTIIKVQKEAEESLASFDKTFTSIKHEAEQSFEKAFSTAEDILPIIKLDDKQSQTTQNTQSNNNKKK</sequence>
<accession>Q54G07</accession>
<protein>
    <recommendedName>
        <fullName>Protein slowmo homolog</fullName>
    </recommendedName>
</protein>
<evidence type="ECO:0000255" key="1">
    <source>
        <dbReference type="PROSITE-ProRule" id="PRU00158"/>
    </source>
</evidence>
<evidence type="ECO:0000305" key="2"/>
<comment type="similarity">
    <text evidence="2">Belongs to the slowmo family.</text>
</comment>
<name>SLMO_DICDI</name>